<keyword id="KW-1015">Disulfide bond</keyword>
<keyword id="KW-0372">Hormone</keyword>
<keyword id="KW-0479">Metal-binding</keyword>
<keyword id="KW-1185">Reference proteome</keyword>
<keyword id="KW-0964">Secreted</keyword>
<keyword id="KW-0732">Signal</keyword>
<keyword id="KW-0862">Zinc</keyword>
<sequence>MGQVFLLMPVLLVSCFLSQGAAIENQRLFNIAVSRVQHLHLLAQKMFNDFDGTLLPDERRQLNKIFLLDFCNSDSIVSPVDKHETQKSSVLKLLHISFRLIESWEYPSQTLIISNSLMVRNANQISEKLSDLKVGINLLITGSQDAYMSLDDNDSQQLPPYGNYYQNLGGDGNVRRNYELLACFKKDMHKVETYLTVAKCRKSLEANCTL</sequence>
<name>SOMA_ONCTS</name>
<protein>
    <recommendedName>
        <fullName>Somatotropin</fullName>
    </recommendedName>
    <alternativeName>
        <fullName>Growth hormone</fullName>
    </alternativeName>
</protein>
<organism>
    <name type="scientific">Oncorhynchus tshawytscha</name>
    <name type="common">Chinook salmon</name>
    <name type="synonym">Salmo tshawytscha</name>
    <dbReference type="NCBI Taxonomy" id="74940"/>
    <lineage>
        <taxon>Eukaryota</taxon>
        <taxon>Metazoa</taxon>
        <taxon>Chordata</taxon>
        <taxon>Craniata</taxon>
        <taxon>Vertebrata</taxon>
        <taxon>Euteleostomi</taxon>
        <taxon>Actinopterygii</taxon>
        <taxon>Neopterygii</taxon>
        <taxon>Teleostei</taxon>
        <taxon>Protacanthopterygii</taxon>
        <taxon>Salmoniformes</taxon>
        <taxon>Salmonidae</taxon>
        <taxon>Salmoninae</taxon>
        <taxon>Oncorhynchus</taxon>
    </lineage>
</organism>
<feature type="signal peptide" evidence="1">
    <location>
        <begin position="1"/>
        <end position="22"/>
    </location>
</feature>
<feature type="chain" id="PRO_0000033040" description="Somatotropin">
    <location>
        <begin position="23"/>
        <end position="210"/>
    </location>
</feature>
<feature type="binding site" evidence="1">
    <location>
        <position position="38"/>
    </location>
    <ligand>
        <name>Zn(2+)</name>
        <dbReference type="ChEBI" id="CHEBI:29105"/>
    </ligand>
</feature>
<feature type="binding site" evidence="1">
    <location>
        <position position="192"/>
    </location>
    <ligand>
        <name>Zn(2+)</name>
        <dbReference type="ChEBI" id="CHEBI:29105"/>
    </ligand>
</feature>
<feature type="disulfide bond" evidence="1">
    <location>
        <begin position="71"/>
        <end position="183"/>
    </location>
</feature>
<feature type="disulfide bond" evidence="1">
    <location>
        <begin position="200"/>
        <end position="208"/>
    </location>
</feature>
<accession>Q07221</accession>
<gene>
    <name type="primary">gh</name>
</gene>
<evidence type="ECO:0000250" key="1"/>
<evidence type="ECO:0000305" key="2"/>
<proteinExistence type="evidence at transcript level"/>
<dbReference type="EMBL" id="S50867">
    <property type="protein sequence ID" value="AAB24612.2"/>
    <property type="molecule type" value="mRNA"/>
</dbReference>
<dbReference type="PIR" id="I51186">
    <property type="entry name" value="I51186"/>
</dbReference>
<dbReference type="SMR" id="Q07221"/>
<dbReference type="Proteomes" id="UP000694402">
    <property type="component" value="Unplaced"/>
</dbReference>
<dbReference type="GO" id="GO:0005615">
    <property type="term" value="C:extracellular space"/>
    <property type="evidence" value="ECO:0007669"/>
    <property type="project" value="InterPro"/>
</dbReference>
<dbReference type="GO" id="GO:0070186">
    <property type="term" value="F:growth hormone activity"/>
    <property type="evidence" value="ECO:0007669"/>
    <property type="project" value="TreeGrafter"/>
</dbReference>
<dbReference type="GO" id="GO:0005131">
    <property type="term" value="F:growth hormone receptor binding"/>
    <property type="evidence" value="ECO:0000315"/>
    <property type="project" value="AgBase"/>
</dbReference>
<dbReference type="GO" id="GO:0046872">
    <property type="term" value="F:metal ion binding"/>
    <property type="evidence" value="ECO:0007669"/>
    <property type="project" value="UniProtKB-KW"/>
</dbReference>
<dbReference type="GO" id="GO:0048513">
    <property type="term" value="P:animal organ development"/>
    <property type="evidence" value="ECO:0007669"/>
    <property type="project" value="TreeGrafter"/>
</dbReference>
<dbReference type="GO" id="GO:0055074">
    <property type="term" value="P:calcium ion homeostasis"/>
    <property type="evidence" value="ECO:0000250"/>
    <property type="project" value="AgBase"/>
</dbReference>
<dbReference type="GO" id="GO:0060396">
    <property type="term" value="P:growth hormone receptor signaling pathway"/>
    <property type="evidence" value="ECO:0007669"/>
    <property type="project" value="TreeGrafter"/>
</dbReference>
<dbReference type="GO" id="GO:0042538">
    <property type="term" value="P:hyperosmotic salinity response"/>
    <property type="evidence" value="ECO:0000250"/>
    <property type="project" value="AgBase"/>
</dbReference>
<dbReference type="GO" id="GO:0010960">
    <property type="term" value="P:magnesium ion homeostasis"/>
    <property type="evidence" value="ECO:0000250"/>
    <property type="project" value="AgBase"/>
</dbReference>
<dbReference type="GO" id="GO:2000844">
    <property type="term" value="P:negative regulation of testosterone secretion"/>
    <property type="evidence" value="ECO:0000315"/>
    <property type="project" value="AgBase"/>
</dbReference>
<dbReference type="GO" id="GO:0045927">
    <property type="term" value="P:positive regulation of growth"/>
    <property type="evidence" value="ECO:0007669"/>
    <property type="project" value="TreeGrafter"/>
</dbReference>
<dbReference type="GO" id="GO:0050766">
    <property type="term" value="P:positive regulation of phagocytosis"/>
    <property type="evidence" value="ECO:0000250"/>
    <property type="project" value="AgBase"/>
</dbReference>
<dbReference type="GO" id="GO:0046427">
    <property type="term" value="P:positive regulation of receptor signaling pathway via JAK-STAT"/>
    <property type="evidence" value="ECO:0007669"/>
    <property type="project" value="TreeGrafter"/>
</dbReference>
<dbReference type="GO" id="GO:2000833">
    <property type="term" value="P:positive regulation of steroid hormone secretion"/>
    <property type="evidence" value="ECO:0000315"/>
    <property type="project" value="AgBase"/>
</dbReference>
<dbReference type="GO" id="GO:0032930">
    <property type="term" value="P:positive regulation of superoxide anion generation"/>
    <property type="evidence" value="ECO:0000250"/>
    <property type="project" value="AgBase"/>
</dbReference>
<dbReference type="GO" id="GO:0002637">
    <property type="term" value="P:regulation of immunoglobulin production"/>
    <property type="evidence" value="ECO:0000250"/>
    <property type="project" value="AgBase"/>
</dbReference>
<dbReference type="GO" id="GO:0031667">
    <property type="term" value="P:response to nutrient levels"/>
    <property type="evidence" value="ECO:0007669"/>
    <property type="project" value="TreeGrafter"/>
</dbReference>
<dbReference type="GO" id="GO:0055078">
    <property type="term" value="P:sodium ion homeostasis"/>
    <property type="evidence" value="ECO:0000250"/>
    <property type="project" value="AgBase"/>
</dbReference>
<dbReference type="CDD" id="cd10285">
    <property type="entry name" value="somatotropin_like"/>
    <property type="match status" value="1"/>
</dbReference>
<dbReference type="FunFam" id="1.20.1250.10:FF:000009">
    <property type="entry name" value="Growth hormone"/>
    <property type="match status" value="1"/>
</dbReference>
<dbReference type="Gene3D" id="1.20.1250.10">
    <property type="match status" value="1"/>
</dbReference>
<dbReference type="InterPro" id="IPR009079">
    <property type="entry name" value="4_helix_cytokine-like_core"/>
</dbReference>
<dbReference type="InterPro" id="IPR034975">
    <property type="entry name" value="Somatotropin"/>
</dbReference>
<dbReference type="InterPro" id="IPR001400">
    <property type="entry name" value="Somatotropin/Prolactin"/>
</dbReference>
<dbReference type="InterPro" id="IPR018116">
    <property type="entry name" value="Somatotropin_CS"/>
</dbReference>
<dbReference type="PANTHER" id="PTHR11417:SF2">
    <property type="entry name" value="SOMATOTROPIN"/>
    <property type="match status" value="1"/>
</dbReference>
<dbReference type="PANTHER" id="PTHR11417">
    <property type="entry name" value="SOMATOTROPIN,PROLACTIN"/>
    <property type="match status" value="1"/>
</dbReference>
<dbReference type="Pfam" id="PF00103">
    <property type="entry name" value="Hormone_1"/>
    <property type="match status" value="1"/>
</dbReference>
<dbReference type="PRINTS" id="PR00836">
    <property type="entry name" value="SOMATOTROPIN"/>
</dbReference>
<dbReference type="SUPFAM" id="SSF47266">
    <property type="entry name" value="4-helical cytokines"/>
    <property type="match status" value="1"/>
</dbReference>
<dbReference type="PROSITE" id="PS00266">
    <property type="entry name" value="SOMATOTROPIN_1"/>
    <property type="match status" value="1"/>
</dbReference>
<dbReference type="PROSITE" id="PS00338">
    <property type="entry name" value="SOMATOTROPIN_2"/>
    <property type="match status" value="1"/>
</dbReference>
<comment type="function">
    <text>Growth hormone plays an important role in growth control and is involved in the regulation of several anabolic processes. Implicated as an osmoregulatory substance important for seawater adaptation.</text>
</comment>
<comment type="subcellular location">
    <subcellularLocation>
        <location>Secreted</location>
    </subcellularLocation>
</comment>
<comment type="similarity">
    <text evidence="2">Belongs to the somatotropin/prolactin family.</text>
</comment>
<reference key="1">
    <citation type="journal article" date="1992" name="Yi Chuan Xue Bao">
        <title>Cloning and sequence analysis of salmon growth hormone cDNA.</title>
        <authorList>
            <person name="Song S."/>
            <person name="Trinh K.T."/>
            <person name="Hew C.-L."/>
        </authorList>
    </citation>
    <scope>NUCLEOTIDE SEQUENCE [MRNA]</scope>
</reference>
<reference key="2">
    <citation type="journal article" date="1993" name="Yi Chuan Xue Bao">
        <authorList>
            <person name="Song S."/>
            <person name="Trinh K.T."/>
            <person name="Hew C.-L."/>
        </authorList>
    </citation>
    <scope>ERRATUM OF PUBMED:1466911</scope>
</reference>